<sequence>MSSTTVAEFANELKKTPETLLDQLKSAGVPKAAPTDALTEADKQRLLGFLKASHGTAEPERKKITLTKKSTSEIKQADATGRARTIQVEVRKKRTFIQRDDGHPATPEVQPVAEAPAAAPAAPRIDEAELARREEEARRQAELIRRQEEELAEKRRLREEAEAREREQAEKAERAEQAEQEAARIAAEKKAADAAAAAPAKEAAKPAAAPVAAAAAAAEQQAADTKLAAQTAATQAKEDAKAKAAAESKARADEEAARAKDLDERRRKALAEAEAIRAMMNAPARVLVPHKAPEKPQPEKAAVKGTLHKPAAPAARPGAPAAPGAAAAPGAAGAGKEVKSAKLSSSWAGDPAKKKEIKTRGDASGGVGRGNWRGGPRGRRGSNDRGGHEEHVQAAPVEARILEVHVPETITVAELAHKMAVKAQEVIKQLMKLGQMATINQSLDQDTAMILVEEMGHNAVVAALDDPEAFTDEDVSAQTAEALPRAPVVTVMGHVDHGKTSLLDYIRRAKVAAGEAGGITQHIGAYHVQTERGMVSFLDTPGHEAFTAMRARGAQATDIVILVVAADDGVMPQTKEAIKHAKAAGVPIVVAINKIDKPDASPDRVKQELVAEEVVPEEYGGDVPFVPVSAKTGQGIDDLLEQVLLQAEVLELKAPVDAAAKGLVIEAQLDKGRGPVATVLVQSGTLKTGDVVLAGSTYGRVRAMLDEDGRTIKSAGPSIPVEIQGLTEVPQAGDEFMVMSDERRAREIATYRAGKFRNTKLAKAQAANLQNMFTDLSAGEVQTLRIIIKADVQGSQEALAQSLLKLATDEVKVQIVYAGVGGISESDINLAIASKAIVIGFNVRADAGARKLAEGNGVQLNYYSIIYDAVDEIKVAMSGMLAPERREEIIGSAEIRTVFVASKIGTVAGSYITSGSVNRSAHFRLLRDNVVIYTGEVDSIKRMKDDVREVREGFECGIKLKNYNDIKEGDQLEFFEIKEIARTL</sequence>
<proteinExistence type="inferred from homology"/>
<accession>C5CLW3</accession>
<gene>
    <name evidence="2" type="primary">infB</name>
    <name type="ordered locus">Vapar_2748</name>
</gene>
<organism>
    <name type="scientific">Variovorax paradoxus (strain S110)</name>
    <dbReference type="NCBI Taxonomy" id="543728"/>
    <lineage>
        <taxon>Bacteria</taxon>
        <taxon>Pseudomonadati</taxon>
        <taxon>Pseudomonadota</taxon>
        <taxon>Betaproteobacteria</taxon>
        <taxon>Burkholderiales</taxon>
        <taxon>Comamonadaceae</taxon>
        <taxon>Variovorax</taxon>
    </lineage>
</organism>
<protein>
    <recommendedName>
        <fullName evidence="2">Translation initiation factor IF-2</fullName>
    </recommendedName>
</protein>
<keyword id="KW-0963">Cytoplasm</keyword>
<keyword id="KW-0342">GTP-binding</keyword>
<keyword id="KW-0396">Initiation factor</keyword>
<keyword id="KW-0547">Nucleotide-binding</keyword>
<keyword id="KW-0648">Protein biosynthesis</keyword>
<comment type="function">
    <text evidence="2">One of the essential components for the initiation of protein synthesis. Protects formylmethionyl-tRNA from spontaneous hydrolysis and promotes its binding to the 30S ribosomal subunits. Also involved in the hydrolysis of GTP during the formation of the 70S ribosomal complex.</text>
</comment>
<comment type="subcellular location">
    <subcellularLocation>
        <location evidence="2">Cytoplasm</location>
    </subcellularLocation>
</comment>
<comment type="similarity">
    <text evidence="2">Belongs to the TRAFAC class translation factor GTPase superfamily. Classic translation factor GTPase family. IF-2 subfamily.</text>
</comment>
<evidence type="ECO:0000250" key="1"/>
<evidence type="ECO:0000255" key="2">
    <source>
        <dbReference type="HAMAP-Rule" id="MF_00100"/>
    </source>
</evidence>
<evidence type="ECO:0000256" key="3">
    <source>
        <dbReference type="SAM" id="MobiDB-lite"/>
    </source>
</evidence>
<reference key="1">
    <citation type="journal article" date="2011" name="J. Bacteriol.">
        <title>Complete genome sequence of the metabolically versatile plant growth-promoting endophyte, Variovorax paradoxus S110.</title>
        <authorList>
            <person name="Han J.I."/>
            <person name="Choi H.K."/>
            <person name="Lee S.W."/>
            <person name="Orwin P.M."/>
            <person name="Kim J."/>
            <person name="Laroe S.L."/>
            <person name="Kim T.G."/>
            <person name="O'Neil J."/>
            <person name="Leadbetter J.R."/>
            <person name="Lee S.Y."/>
            <person name="Hur C.G."/>
            <person name="Spain J.C."/>
            <person name="Ovchinnikova G."/>
            <person name="Goodwin L."/>
            <person name="Han C."/>
        </authorList>
    </citation>
    <scope>NUCLEOTIDE SEQUENCE [LARGE SCALE GENOMIC DNA]</scope>
    <source>
        <strain>S110</strain>
    </source>
</reference>
<dbReference type="EMBL" id="CP001635">
    <property type="protein sequence ID" value="ACS19370.1"/>
    <property type="molecule type" value="Genomic_DNA"/>
</dbReference>
<dbReference type="SMR" id="C5CLW3"/>
<dbReference type="STRING" id="543728.Vapar_2748"/>
<dbReference type="KEGG" id="vap:Vapar_2748"/>
<dbReference type="eggNOG" id="COG0532">
    <property type="taxonomic scope" value="Bacteria"/>
</dbReference>
<dbReference type="HOGENOM" id="CLU_006301_6_2_4"/>
<dbReference type="OrthoDB" id="9811804at2"/>
<dbReference type="GO" id="GO:0005829">
    <property type="term" value="C:cytosol"/>
    <property type="evidence" value="ECO:0007669"/>
    <property type="project" value="TreeGrafter"/>
</dbReference>
<dbReference type="GO" id="GO:0005525">
    <property type="term" value="F:GTP binding"/>
    <property type="evidence" value="ECO:0007669"/>
    <property type="project" value="UniProtKB-KW"/>
</dbReference>
<dbReference type="GO" id="GO:0003924">
    <property type="term" value="F:GTPase activity"/>
    <property type="evidence" value="ECO:0007669"/>
    <property type="project" value="UniProtKB-UniRule"/>
</dbReference>
<dbReference type="GO" id="GO:0097216">
    <property type="term" value="F:guanosine tetraphosphate binding"/>
    <property type="evidence" value="ECO:0007669"/>
    <property type="project" value="UniProtKB-ARBA"/>
</dbReference>
<dbReference type="GO" id="GO:0003743">
    <property type="term" value="F:translation initiation factor activity"/>
    <property type="evidence" value="ECO:0007669"/>
    <property type="project" value="UniProtKB-UniRule"/>
</dbReference>
<dbReference type="CDD" id="cd01887">
    <property type="entry name" value="IF2_eIF5B"/>
    <property type="match status" value="1"/>
</dbReference>
<dbReference type="CDD" id="cd03702">
    <property type="entry name" value="IF2_mtIF2_II"/>
    <property type="match status" value="1"/>
</dbReference>
<dbReference type="CDD" id="cd03692">
    <property type="entry name" value="mtIF2_IVc"/>
    <property type="match status" value="1"/>
</dbReference>
<dbReference type="FunFam" id="2.40.30.10:FF:000007">
    <property type="entry name" value="Translation initiation factor IF-2"/>
    <property type="match status" value="1"/>
</dbReference>
<dbReference type="FunFam" id="2.40.30.10:FF:000008">
    <property type="entry name" value="Translation initiation factor IF-2"/>
    <property type="match status" value="1"/>
</dbReference>
<dbReference type="FunFam" id="3.40.50.10050:FF:000001">
    <property type="entry name" value="Translation initiation factor IF-2"/>
    <property type="match status" value="1"/>
</dbReference>
<dbReference type="FunFam" id="3.40.50.300:FF:000019">
    <property type="entry name" value="Translation initiation factor IF-2"/>
    <property type="match status" value="1"/>
</dbReference>
<dbReference type="Gene3D" id="3.40.50.300">
    <property type="entry name" value="P-loop containing nucleotide triphosphate hydrolases"/>
    <property type="match status" value="1"/>
</dbReference>
<dbReference type="Gene3D" id="3.30.56.50">
    <property type="entry name" value="Putative DNA-binding domain, N-terminal subdomain of bacterial translation initiation factor IF2"/>
    <property type="match status" value="1"/>
</dbReference>
<dbReference type="Gene3D" id="2.40.30.10">
    <property type="entry name" value="Translation factors"/>
    <property type="match status" value="2"/>
</dbReference>
<dbReference type="Gene3D" id="3.40.50.10050">
    <property type="entry name" value="Translation initiation factor IF- 2, domain 3"/>
    <property type="match status" value="1"/>
</dbReference>
<dbReference type="HAMAP" id="MF_00100_B">
    <property type="entry name" value="IF_2_B"/>
    <property type="match status" value="1"/>
</dbReference>
<dbReference type="InterPro" id="IPR009061">
    <property type="entry name" value="DNA-bd_dom_put_sf"/>
</dbReference>
<dbReference type="InterPro" id="IPR053905">
    <property type="entry name" value="EF-G-like_DII"/>
</dbReference>
<dbReference type="InterPro" id="IPR004161">
    <property type="entry name" value="EFTu-like_2"/>
</dbReference>
<dbReference type="InterPro" id="IPR013575">
    <property type="entry name" value="IF2_assoc_dom_bac"/>
</dbReference>
<dbReference type="InterPro" id="IPR044145">
    <property type="entry name" value="IF2_II"/>
</dbReference>
<dbReference type="InterPro" id="IPR006847">
    <property type="entry name" value="IF2_N"/>
</dbReference>
<dbReference type="InterPro" id="IPR027417">
    <property type="entry name" value="P-loop_NTPase"/>
</dbReference>
<dbReference type="InterPro" id="IPR005225">
    <property type="entry name" value="Small_GTP-bd"/>
</dbReference>
<dbReference type="InterPro" id="IPR000795">
    <property type="entry name" value="T_Tr_GTP-bd_dom"/>
</dbReference>
<dbReference type="InterPro" id="IPR000178">
    <property type="entry name" value="TF_IF2_bacterial-like"/>
</dbReference>
<dbReference type="InterPro" id="IPR015760">
    <property type="entry name" value="TIF_IF2"/>
</dbReference>
<dbReference type="InterPro" id="IPR023115">
    <property type="entry name" value="TIF_IF2_dom3"/>
</dbReference>
<dbReference type="InterPro" id="IPR036925">
    <property type="entry name" value="TIF_IF2_dom3_sf"/>
</dbReference>
<dbReference type="InterPro" id="IPR009000">
    <property type="entry name" value="Transl_B-barrel_sf"/>
</dbReference>
<dbReference type="NCBIfam" id="TIGR00487">
    <property type="entry name" value="IF-2"/>
    <property type="match status" value="1"/>
</dbReference>
<dbReference type="NCBIfam" id="TIGR00231">
    <property type="entry name" value="small_GTP"/>
    <property type="match status" value="1"/>
</dbReference>
<dbReference type="PANTHER" id="PTHR43381:SF5">
    <property type="entry name" value="TR-TYPE G DOMAIN-CONTAINING PROTEIN"/>
    <property type="match status" value="1"/>
</dbReference>
<dbReference type="PANTHER" id="PTHR43381">
    <property type="entry name" value="TRANSLATION INITIATION FACTOR IF-2-RELATED"/>
    <property type="match status" value="1"/>
</dbReference>
<dbReference type="Pfam" id="PF22042">
    <property type="entry name" value="EF-G_D2"/>
    <property type="match status" value="1"/>
</dbReference>
<dbReference type="Pfam" id="PF00009">
    <property type="entry name" value="GTP_EFTU"/>
    <property type="match status" value="1"/>
</dbReference>
<dbReference type="Pfam" id="PF03144">
    <property type="entry name" value="GTP_EFTU_D2"/>
    <property type="match status" value="1"/>
</dbReference>
<dbReference type="Pfam" id="PF11987">
    <property type="entry name" value="IF-2"/>
    <property type="match status" value="1"/>
</dbReference>
<dbReference type="Pfam" id="PF08364">
    <property type="entry name" value="IF2_assoc"/>
    <property type="match status" value="1"/>
</dbReference>
<dbReference type="Pfam" id="PF04760">
    <property type="entry name" value="IF2_N"/>
    <property type="match status" value="2"/>
</dbReference>
<dbReference type="SUPFAM" id="SSF52156">
    <property type="entry name" value="Initiation factor IF2/eIF5b, domain 3"/>
    <property type="match status" value="1"/>
</dbReference>
<dbReference type="SUPFAM" id="SSF52540">
    <property type="entry name" value="P-loop containing nucleoside triphosphate hydrolases"/>
    <property type="match status" value="1"/>
</dbReference>
<dbReference type="SUPFAM" id="SSF46955">
    <property type="entry name" value="Putative DNA-binding domain"/>
    <property type="match status" value="1"/>
</dbReference>
<dbReference type="SUPFAM" id="SSF50447">
    <property type="entry name" value="Translation proteins"/>
    <property type="match status" value="2"/>
</dbReference>
<dbReference type="PROSITE" id="PS51722">
    <property type="entry name" value="G_TR_2"/>
    <property type="match status" value="1"/>
</dbReference>
<feature type="chain" id="PRO_1000202788" description="Translation initiation factor IF-2">
    <location>
        <begin position="1"/>
        <end position="984"/>
    </location>
</feature>
<feature type="domain" description="tr-type G">
    <location>
        <begin position="484"/>
        <end position="653"/>
    </location>
</feature>
<feature type="region of interest" description="Disordered" evidence="3">
    <location>
        <begin position="92"/>
        <end position="267"/>
    </location>
</feature>
<feature type="region of interest" description="Disordered" evidence="3">
    <location>
        <begin position="280"/>
        <end position="392"/>
    </location>
</feature>
<feature type="region of interest" description="G1" evidence="1">
    <location>
        <begin position="493"/>
        <end position="500"/>
    </location>
</feature>
<feature type="region of interest" description="G2" evidence="1">
    <location>
        <begin position="518"/>
        <end position="522"/>
    </location>
</feature>
<feature type="region of interest" description="G3" evidence="1">
    <location>
        <begin position="539"/>
        <end position="542"/>
    </location>
</feature>
<feature type="region of interest" description="G4" evidence="1">
    <location>
        <begin position="593"/>
        <end position="596"/>
    </location>
</feature>
<feature type="region of interest" description="G5" evidence="1">
    <location>
        <begin position="629"/>
        <end position="631"/>
    </location>
</feature>
<feature type="compositionally biased region" description="Low complexity" evidence="3">
    <location>
        <begin position="104"/>
        <end position="123"/>
    </location>
</feature>
<feature type="compositionally biased region" description="Basic and acidic residues" evidence="3">
    <location>
        <begin position="124"/>
        <end position="177"/>
    </location>
</feature>
<feature type="compositionally biased region" description="Low complexity" evidence="3">
    <location>
        <begin position="193"/>
        <end position="235"/>
    </location>
</feature>
<feature type="compositionally biased region" description="Basic and acidic residues" evidence="3">
    <location>
        <begin position="236"/>
        <end position="267"/>
    </location>
</feature>
<feature type="compositionally biased region" description="Basic and acidic residues" evidence="3">
    <location>
        <begin position="291"/>
        <end position="302"/>
    </location>
</feature>
<feature type="compositionally biased region" description="Low complexity" evidence="3">
    <location>
        <begin position="310"/>
        <end position="335"/>
    </location>
</feature>
<feature type="compositionally biased region" description="Basic and acidic residues" evidence="3">
    <location>
        <begin position="351"/>
        <end position="361"/>
    </location>
</feature>
<feature type="compositionally biased region" description="Gly residues" evidence="3">
    <location>
        <begin position="363"/>
        <end position="375"/>
    </location>
</feature>
<feature type="compositionally biased region" description="Basic and acidic residues" evidence="3">
    <location>
        <begin position="381"/>
        <end position="392"/>
    </location>
</feature>
<feature type="binding site" evidence="2">
    <location>
        <begin position="493"/>
        <end position="500"/>
    </location>
    <ligand>
        <name>GTP</name>
        <dbReference type="ChEBI" id="CHEBI:37565"/>
    </ligand>
</feature>
<feature type="binding site" evidence="2">
    <location>
        <begin position="539"/>
        <end position="543"/>
    </location>
    <ligand>
        <name>GTP</name>
        <dbReference type="ChEBI" id="CHEBI:37565"/>
    </ligand>
</feature>
<feature type="binding site" evidence="2">
    <location>
        <begin position="593"/>
        <end position="596"/>
    </location>
    <ligand>
        <name>GTP</name>
        <dbReference type="ChEBI" id="CHEBI:37565"/>
    </ligand>
</feature>
<name>IF2_VARPS</name>